<accession>B5LMM8</accession>
<keyword id="KW-0066">ATP synthesis</keyword>
<keyword id="KW-0138">CF(0)</keyword>
<keyword id="KW-0150">Chloroplast</keyword>
<keyword id="KW-0375">Hydrogen ion transport</keyword>
<keyword id="KW-0406">Ion transport</keyword>
<keyword id="KW-0472">Membrane</keyword>
<keyword id="KW-0934">Plastid</keyword>
<keyword id="KW-1185">Reference proteome</keyword>
<keyword id="KW-0793">Thylakoid</keyword>
<keyword id="KW-0812">Transmembrane</keyword>
<keyword id="KW-1133">Transmembrane helix</keyword>
<keyword id="KW-0813">Transport</keyword>
<feature type="chain" id="PRO_0000362542" description="ATP synthase subunit a, chloroplastic">
    <location>
        <begin position="1"/>
        <end position="247"/>
    </location>
</feature>
<feature type="transmembrane region" description="Helical" evidence="1">
    <location>
        <begin position="38"/>
        <end position="58"/>
    </location>
</feature>
<feature type="transmembrane region" description="Helical" evidence="1">
    <location>
        <begin position="95"/>
        <end position="115"/>
    </location>
</feature>
<feature type="transmembrane region" description="Helical" evidence="1">
    <location>
        <begin position="134"/>
        <end position="154"/>
    </location>
</feature>
<feature type="transmembrane region" description="Helical" evidence="1">
    <location>
        <begin position="199"/>
        <end position="219"/>
    </location>
</feature>
<feature type="transmembrane region" description="Helical" evidence="1">
    <location>
        <begin position="220"/>
        <end position="240"/>
    </location>
</feature>
<organism>
    <name type="scientific">Cicer arietinum</name>
    <name type="common">Chickpea</name>
    <name type="synonym">Garbanzo</name>
    <dbReference type="NCBI Taxonomy" id="3827"/>
    <lineage>
        <taxon>Eukaryota</taxon>
        <taxon>Viridiplantae</taxon>
        <taxon>Streptophyta</taxon>
        <taxon>Embryophyta</taxon>
        <taxon>Tracheophyta</taxon>
        <taxon>Spermatophyta</taxon>
        <taxon>Magnoliopsida</taxon>
        <taxon>eudicotyledons</taxon>
        <taxon>Gunneridae</taxon>
        <taxon>Pentapetalae</taxon>
        <taxon>rosids</taxon>
        <taxon>fabids</taxon>
        <taxon>Fabales</taxon>
        <taxon>Fabaceae</taxon>
        <taxon>Papilionoideae</taxon>
        <taxon>50 kb inversion clade</taxon>
        <taxon>NPAAA clade</taxon>
        <taxon>Hologalegina</taxon>
        <taxon>IRL clade</taxon>
        <taxon>Cicereae</taxon>
        <taxon>Cicer</taxon>
    </lineage>
</organism>
<reference key="1">
    <citation type="journal article" date="2008" name="Mol. Phylogenet. Evol.">
        <title>Complete plastid genome sequence of the chickpea (Cicer arietinum) and the phylogenetic distribution of rps12 and clpP intron losses among legumes (Leguminosae).</title>
        <authorList>
            <person name="Jansen R.K."/>
            <person name="Wojciechowski M.F."/>
            <person name="Sanniyasi E."/>
            <person name="Lee S.-B."/>
            <person name="Daniell H."/>
        </authorList>
    </citation>
    <scope>NUCLEOTIDE SEQUENCE [LARGE SCALE GENOMIC DNA]</scope>
</reference>
<protein>
    <recommendedName>
        <fullName evidence="1">ATP synthase subunit a, chloroplastic</fullName>
    </recommendedName>
    <alternativeName>
        <fullName evidence="1">ATP synthase F0 sector subunit a</fullName>
    </alternativeName>
    <alternativeName>
        <fullName evidence="1">F-ATPase subunit IV</fullName>
    </alternativeName>
</protein>
<proteinExistence type="inferred from homology"/>
<sequence>MNVLLCSINTLNRFYDISALEVGQHFYWQIGDFQVHAQVLITSWVVIAILLISTILVVRNPQTIPTSGQNFFEYVLEFIRDVSKTQIGEEYGPWVPFIGTLFLFIFVSNWSGALLPWKIIKLPHGELAAPTNDINTTVALALLTSVAYFYAGISKKGLAYFGKYIQPTPILLPINILEDFTKPLSLSFRLFGNILADELVVVVLVSLVPLVIPIPVMFLGLFTSGIQALIFATLAAAYIGESMEGHH</sequence>
<evidence type="ECO:0000255" key="1">
    <source>
        <dbReference type="HAMAP-Rule" id="MF_01393"/>
    </source>
</evidence>
<dbReference type="EMBL" id="EU835853">
    <property type="protein sequence ID" value="ACH41074.1"/>
    <property type="molecule type" value="Genomic_DNA"/>
</dbReference>
<dbReference type="RefSeq" id="YP_002149737.1">
    <property type="nucleotide sequence ID" value="NC_011163.1"/>
</dbReference>
<dbReference type="SMR" id="B5LMM8"/>
<dbReference type="GeneID" id="6797466"/>
<dbReference type="KEGG" id="cam:6797466"/>
<dbReference type="OrthoDB" id="1378527at2759"/>
<dbReference type="Proteomes" id="UP000087171">
    <property type="component" value="Chloroplast Pltd"/>
</dbReference>
<dbReference type="GO" id="GO:0009535">
    <property type="term" value="C:chloroplast thylakoid membrane"/>
    <property type="evidence" value="ECO:0007669"/>
    <property type="project" value="UniProtKB-SubCell"/>
</dbReference>
<dbReference type="GO" id="GO:0005886">
    <property type="term" value="C:plasma membrane"/>
    <property type="evidence" value="ECO:0007669"/>
    <property type="project" value="UniProtKB-UniRule"/>
</dbReference>
<dbReference type="GO" id="GO:0045259">
    <property type="term" value="C:proton-transporting ATP synthase complex"/>
    <property type="evidence" value="ECO:0007669"/>
    <property type="project" value="UniProtKB-KW"/>
</dbReference>
<dbReference type="GO" id="GO:0046933">
    <property type="term" value="F:proton-transporting ATP synthase activity, rotational mechanism"/>
    <property type="evidence" value="ECO:0007669"/>
    <property type="project" value="UniProtKB-UniRule"/>
</dbReference>
<dbReference type="CDD" id="cd00310">
    <property type="entry name" value="ATP-synt_Fo_a_6"/>
    <property type="match status" value="1"/>
</dbReference>
<dbReference type="FunFam" id="1.20.120.220:FF:000001">
    <property type="entry name" value="ATP synthase subunit a, chloroplastic"/>
    <property type="match status" value="1"/>
</dbReference>
<dbReference type="Gene3D" id="1.20.120.220">
    <property type="entry name" value="ATP synthase, F0 complex, subunit A"/>
    <property type="match status" value="1"/>
</dbReference>
<dbReference type="HAMAP" id="MF_01393">
    <property type="entry name" value="ATP_synth_a_bact"/>
    <property type="match status" value="1"/>
</dbReference>
<dbReference type="InterPro" id="IPR045082">
    <property type="entry name" value="ATP_syn_F0_a_bact/chloroplast"/>
</dbReference>
<dbReference type="InterPro" id="IPR000568">
    <property type="entry name" value="ATP_synth_F0_asu"/>
</dbReference>
<dbReference type="InterPro" id="IPR023011">
    <property type="entry name" value="ATP_synth_F0_asu_AS"/>
</dbReference>
<dbReference type="InterPro" id="IPR035908">
    <property type="entry name" value="F0_ATP_A_sf"/>
</dbReference>
<dbReference type="NCBIfam" id="TIGR01131">
    <property type="entry name" value="ATP_synt_6_or_A"/>
    <property type="match status" value="1"/>
</dbReference>
<dbReference type="PANTHER" id="PTHR42823">
    <property type="entry name" value="ATP SYNTHASE SUBUNIT A, CHLOROPLASTIC"/>
    <property type="match status" value="1"/>
</dbReference>
<dbReference type="PANTHER" id="PTHR42823:SF3">
    <property type="entry name" value="ATP SYNTHASE SUBUNIT A, CHLOROPLASTIC"/>
    <property type="match status" value="1"/>
</dbReference>
<dbReference type="Pfam" id="PF00119">
    <property type="entry name" value="ATP-synt_A"/>
    <property type="match status" value="1"/>
</dbReference>
<dbReference type="PRINTS" id="PR00123">
    <property type="entry name" value="ATPASEA"/>
</dbReference>
<dbReference type="SUPFAM" id="SSF81336">
    <property type="entry name" value="F1F0 ATP synthase subunit A"/>
    <property type="match status" value="1"/>
</dbReference>
<dbReference type="PROSITE" id="PS00449">
    <property type="entry name" value="ATPASE_A"/>
    <property type="match status" value="1"/>
</dbReference>
<name>ATPI_CICAR</name>
<gene>
    <name evidence="1" type="primary">atpI</name>
</gene>
<geneLocation type="chloroplast"/>
<comment type="function">
    <text evidence="1">Key component of the proton channel; it plays a direct role in the translocation of protons across the membrane.</text>
</comment>
<comment type="subunit">
    <text evidence="1">F-type ATPases have 2 components, CF(1) - the catalytic core - and CF(0) - the membrane proton channel. CF(1) has five subunits: alpha(3), beta(3), gamma(1), delta(1), epsilon(1). CF(0) has four main subunits: a, b, b' and c.</text>
</comment>
<comment type="subcellular location">
    <subcellularLocation>
        <location evidence="1">Plastid</location>
        <location evidence="1">Chloroplast thylakoid membrane</location>
        <topology evidence="1">Multi-pass membrane protein</topology>
    </subcellularLocation>
</comment>
<comment type="similarity">
    <text evidence="1">Belongs to the ATPase A chain family.</text>
</comment>